<reference key="1">
    <citation type="journal article" date="2018" name="Front. Plant Sci.">
        <title>In planta functional analysis and subcellular localization of the oomycete pathogen Plasmopara viticola candidate RXLR effector repertoire.</title>
        <authorList>
            <person name="Liu Y."/>
            <person name="Lan X."/>
            <person name="Song S."/>
            <person name="Yin L."/>
            <person name="Dry I.B."/>
            <person name="Qu J."/>
            <person name="Xiang J."/>
            <person name="Lu J."/>
        </authorList>
    </citation>
    <scope>NUCLEOTIDE SEQUENCE [MRNA]</scope>
    <scope>DOMAIN</scope>
    <scope>FUNCTION</scope>
    <scope>SUBCELLULAR LOCATION</scope>
</reference>
<sequence length="484" mass="53837">MRSAYPVLTALLVVASSQIAAGSGHQLQAYDHDRITDDNAVMKSLSTRFLRGSRDVHNNVANEERSVYSVLARMIKKGIKKMPRTAEVLKMKPHIKKASKKSPHEARLVKELFHAAEAKETMQGAREYKKLRRATRAAVEALEKHWNPSKTAVSGDAFHDIHSNQMLSVKKWKFNLTGLKPMVVNDEHHGMIDSVHKAFLTVCDKNVKPTRAETSYLWGLMNWKLAKYPRRSHKESLIEHAQRRVLLDMRKMKATKKVWPEWENLPDSLKFGVLDYLLNLHYQRLVRMYNIFARNRPDRNPAPLNPELNPVGNTGTSAAMAVAENPKGQSPYPSTPLTAASTSKGGRSNLKKRSKRTSDGNTDTASFPSKKLKVRSSKSVMPLLTEPTTSGDHSAPAKKSKSSSSGPSRAFAPDKSGDQTFITENSRLSFDGPSSAVDPFKQSKVHESKSLAPSSSVLTPEDVDTELSLGGIYDRSTYKAPSKP</sequence>
<proteinExistence type="evidence at transcript level"/>
<evidence type="ECO:0000255" key="1"/>
<evidence type="ECO:0000255" key="2">
    <source>
        <dbReference type="PROSITE-ProRule" id="PRU00498"/>
    </source>
</evidence>
<evidence type="ECO:0000256" key="3">
    <source>
        <dbReference type="SAM" id="MobiDB-lite"/>
    </source>
</evidence>
<evidence type="ECO:0000269" key="4">
    <source>
    </source>
</evidence>
<evidence type="ECO:0000303" key="5">
    <source>
    </source>
</evidence>
<evidence type="ECO:0000305" key="6"/>
<evidence type="ECO:0000305" key="7">
    <source>
    </source>
</evidence>
<dbReference type="SMR" id="P0CV41"/>
<dbReference type="GlyCosmos" id="P0CV41">
    <property type="glycosylation" value="1 site, No reported glycans"/>
</dbReference>
<dbReference type="GO" id="GO:0005576">
    <property type="term" value="C:extracellular region"/>
    <property type="evidence" value="ECO:0007669"/>
    <property type="project" value="UniProtKB-SubCell"/>
</dbReference>
<dbReference type="GO" id="GO:0042025">
    <property type="term" value="C:host cell nucleus"/>
    <property type="evidence" value="ECO:0007669"/>
    <property type="project" value="UniProtKB-SubCell"/>
</dbReference>
<organism>
    <name type="scientific">Plasmopara viticola</name>
    <name type="common">Downy mildew of grapevine</name>
    <name type="synonym">Botrytis viticola</name>
    <dbReference type="NCBI Taxonomy" id="143451"/>
    <lineage>
        <taxon>Eukaryota</taxon>
        <taxon>Sar</taxon>
        <taxon>Stramenopiles</taxon>
        <taxon>Oomycota</taxon>
        <taxon>Peronosporales</taxon>
        <taxon>Peronosporaceae</taxon>
        <taxon>Plasmopara</taxon>
    </lineage>
</organism>
<gene>
    <name evidence="5" type="primary">RXLR104</name>
</gene>
<protein>
    <recommendedName>
        <fullName evidence="5">Secreted RxLR effector protein 104</fullName>
    </recommendedName>
</protein>
<name>RL104_PLAVT</name>
<comment type="function">
    <text evidence="4">Secreted effector that completely suppresses the host cell death induced by cell death-inducing proteins.</text>
</comment>
<comment type="subcellular location">
    <subcellularLocation>
        <location evidence="4">Secreted</location>
    </subcellularLocation>
    <subcellularLocation>
        <location evidence="4">Host nucleus</location>
    </subcellularLocation>
</comment>
<comment type="domain">
    <text evidence="7">The RxLR-dEER motif acts to carry the protein into the host cell cytoplasm through binding to cell surface phosphatidylinositol-3-phosphate.</text>
</comment>
<comment type="similarity">
    <text evidence="6">Belongs to the RxLR effector family.</text>
</comment>
<accession>P0CV41</accession>
<feature type="signal peptide" evidence="1">
    <location>
        <begin position="1"/>
        <end position="24"/>
    </location>
</feature>
<feature type="chain" id="PRO_0000447950" description="Secreted RxLR effector protein 104">
    <location>
        <begin position="25"/>
        <end position="484"/>
    </location>
</feature>
<feature type="region of interest" description="Disordered" evidence="3">
    <location>
        <begin position="324"/>
        <end position="463"/>
    </location>
</feature>
<feature type="short sequence motif" description="RxLR-dEER" evidence="7">
    <location>
        <begin position="48"/>
        <end position="65"/>
    </location>
</feature>
<feature type="compositionally biased region" description="Polar residues" evidence="3">
    <location>
        <begin position="327"/>
        <end position="346"/>
    </location>
</feature>
<feature type="compositionally biased region" description="Low complexity" evidence="3">
    <location>
        <begin position="402"/>
        <end position="413"/>
    </location>
</feature>
<feature type="compositionally biased region" description="Polar residues" evidence="3">
    <location>
        <begin position="418"/>
        <end position="428"/>
    </location>
</feature>
<feature type="glycosylation site" description="N-linked (GlcNAc...) asparagine" evidence="2">
    <location>
        <position position="175"/>
    </location>
</feature>
<keyword id="KW-0325">Glycoprotein</keyword>
<keyword id="KW-1048">Host nucleus</keyword>
<keyword id="KW-0964">Secreted</keyword>
<keyword id="KW-0732">Signal</keyword>
<keyword id="KW-0843">Virulence</keyword>